<evidence type="ECO:0000250" key="1"/>
<evidence type="ECO:0000255" key="2">
    <source>
        <dbReference type="HAMAP-Rule" id="MF_01345"/>
    </source>
</evidence>
<evidence type="ECO:0000305" key="3"/>
<name>RS17_ECOL6</name>
<protein>
    <recommendedName>
        <fullName evidence="2">Small ribosomal subunit protein uS17</fullName>
    </recommendedName>
    <alternativeName>
        <fullName evidence="3">30S ribosomal protein S17</fullName>
    </alternativeName>
</protein>
<gene>
    <name evidence="2" type="primary">rpsQ</name>
    <name type="ordered locus">c4076</name>
</gene>
<dbReference type="EMBL" id="AE014075">
    <property type="protein sequence ID" value="AAN82514.1"/>
    <property type="molecule type" value="Genomic_DNA"/>
</dbReference>
<dbReference type="RefSeq" id="WP_000130100.1">
    <property type="nucleotide sequence ID" value="NZ_CP051263.1"/>
</dbReference>
<dbReference type="SMR" id="P0AG64"/>
<dbReference type="STRING" id="199310.c4076"/>
<dbReference type="GeneID" id="93778676"/>
<dbReference type="KEGG" id="ecc:c4076"/>
<dbReference type="eggNOG" id="COG0186">
    <property type="taxonomic scope" value="Bacteria"/>
</dbReference>
<dbReference type="HOGENOM" id="CLU_073626_1_1_6"/>
<dbReference type="BioCyc" id="ECOL199310:C4076-MONOMER"/>
<dbReference type="Proteomes" id="UP000001410">
    <property type="component" value="Chromosome"/>
</dbReference>
<dbReference type="GO" id="GO:0022627">
    <property type="term" value="C:cytosolic small ribosomal subunit"/>
    <property type="evidence" value="ECO:0007669"/>
    <property type="project" value="TreeGrafter"/>
</dbReference>
<dbReference type="GO" id="GO:0019843">
    <property type="term" value="F:rRNA binding"/>
    <property type="evidence" value="ECO:0007669"/>
    <property type="project" value="UniProtKB-UniRule"/>
</dbReference>
<dbReference type="GO" id="GO:0003735">
    <property type="term" value="F:structural constituent of ribosome"/>
    <property type="evidence" value="ECO:0007669"/>
    <property type="project" value="InterPro"/>
</dbReference>
<dbReference type="GO" id="GO:0006412">
    <property type="term" value="P:translation"/>
    <property type="evidence" value="ECO:0007669"/>
    <property type="project" value="UniProtKB-UniRule"/>
</dbReference>
<dbReference type="CDD" id="cd00364">
    <property type="entry name" value="Ribosomal_uS17"/>
    <property type="match status" value="1"/>
</dbReference>
<dbReference type="FunFam" id="2.40.50.140:FF:000014">
    <property type="entry name" value="30S ribosomal protein S17"/>
    <property type="match status" value="1"/>
</dbReference>
<dbReference type="Gene3D" id="2.40.50.140">
    <property type="entry name" value="Nucleic acid-binding proteins"/>
    <property type="match status" value="1"/>
</dbReference>
<dbReference type="HAMAP" id="MF_01345_B">
    <property type="entry name" value="Ribosomal_uS17_B"/>
    <property type="match status" value="1"/>
</dbReference>
<dbReference type="InterPro" id="IPR012340">
    <property type="entry name" value="NA-bd_OB-fold"/>
</dbReference>
<dbReference type="InterPro" id="IPR000266">
    <property type="entry name" value="Ribosomal_uS17"/>
</dbReference>
<dbReference type="InterPro" id="IPR019984">
    <property type="entry name" value="Ribosomal_uS17_bact/chlr"/>
</dbReference>
<dbReference type="InterPro" id="IPR019979">
    <property type="entry name" value="Ribosomal_uS17_CS"/>
</dbReference>
<dbReference type="NCBIfam" id="NF004123">
    <property type="entry name" value="PRK05610.1"/>
    <property type="match status" value="1"/>
</dbReference>
<dbReference type="NCBIfam" id="TIGR03635">
    <property type="entry name" value="uS17_bact"/>
    <property type="match status" value="1"/>
</dbReference>
<dbReference type="PANTHER" id="PTHR10744">
    <property type="entry name" value="40S RIBOSOMAL PROTEIN S11 FAMILY MEMBER"/>
    <property type="match status" value="1"/>
</dbReference>
<dbReference type="PANTHER" id="PTHR10744:SF1">
    <property type="entry name" value="SMALL RIBOSOMAL SUBUNIT PROTEIN US17M"/>
    <property type="match status" value="1"/>
</dbReference>
<dbReference type="Pfam" id="PF00366">
    <property type="entry name" value="Ribosomal_S17"/>
    <property type="match status" value="1"/>
</dbReference>
<dbReference type="PRINTS" id="PR00973">
    <property type="entry name" value="RIBOSOMALS17"/>
</dbReference>
<dbReference type="SUPFAM" id="SSF50249">
    <property type="entry name" value="Nucleic acid-binding proteins"/>
    <property type="match status" value="1"/>
</dbReference>
<dbReference type="PROSITE" id="PS00056">
    <property type="entry name" value="RIBOSOMAL_S17"/>
    <property type="match status" value="1"/>
</dbReference>
<keyword id="KW-1185">Reference proteome</keyword>
<keyword id="KW-0687">Ribonucleoprotein</keyword>
<keyword id="KW-0689">Ribosomal protein</keyword>
<keyword id="KW-0694">RNA-binding</keyword>
<keyword id="KW-0699">rRNA-binding</keyword>
<proteinExistence type="inferred from homology"/>
<comment type="function">
    <text evidence="2">One of the primary rRNA binding proteins, it binds specifically to the 5'-end of 16S ribosomal RNA.</text>
</comment>
<comment type="subunit">
    <text evidence="2">Part of the 30S ribosomal subunit.</text>
</comment>
<comment type="similarity">
    <text evidence="2">Belongs to the universal ribosomal protein uS17 family.</text>
</comment>
<organism>
    <name type="scientific">Escherichia coli O6:H1 (strain CFT073 / ATCC 700928 / UPEC)</name>
    <dbReference type="NCBI Taxonomy" id="199310"/>
    <lineage>
        <taxon>Bacteria</taxon>
        <taxon>Pseudomonadati</taxon>
        <taxon>Pseudomonadota</taxon>
        <taxon>Gammaproteobacteria</taxon>
        <taxon>Enterobacterales</taxon>
        <taxon>Enterobacteriaceae</taxon>
        <taxon>Escherichia</taxon>
    </lineage>
</organism>
<accession>P0AG64</accession>
<accession>P02373</accession>
<reference key="1">
    <citation type="journal article" date="2002" name="Proc. Natl. Acad. Sci. U.S.A.">
        <title>Extensive mosaic structure revealed by the complete genome sequence of uropathogenic Escherichia coli.</title>
        <authorList>
            <person name="Welch R.A."/>
            <person name="Burland V."/>
            <person name="Plunkett G. III"/>
            <person name="Redford P."/>
            <person name="Roesch P."/>
            <person name="Rasko D."/>
            <person name="Buckles E.L."/>
            <person name="Liou S.-R."/>
            <person name="Boutin A."/>
            <person name="Hackett J."/>
            <person name="Stroud D."/>
            <person name="Mayhew G.F."/>
            <person name="Rose D.J."/>
            <person name="Zhou S."/>
            <person name="Schwartz D.C."/>
            <person name="Perna N.T."/>
            <person name="Mobley H.L.T."/>
            <person name="Donnenberg M.S."/>
            <person name="Blattner F.R."/>
        </authorList>
    </citation>
    <scope>NUCLEOTIDE SEQUENCE [LARGE SCALE GENOMIC DNA]</scope>
    <source>
        <strain>CFT073 / ATCC 700928 / UPEC</strain>
    </source>
</reference>
<sequence>MTDKIRTLQGRVVSDKMEKSIVVAIERFVKHPIYGKFIKRTTKLHVHDENNECGIGDVVEIRECRPLSKTKSWTLVRVVEKAVL</sequence>
<feature type="initiator methionine" description="Removed" evidence="1">
    <location>
        <position position="1"/>
    </location>
</feature>
<feature type="chain" id="PRO_0000128458" description="Small ribosomal subunit protein uS17">
    <location>
        <begin position="2"/>
        <end position="84"/>
    </location>
</feature>